<reference key="1">
    <citation type="journal article" date="2004" name="Nature">
        <title>Genome evolution in yeasts.</title>
        <authorList>
            <person name="Dujon B."/>
            <person name="Sherman D."/>
            <person name="Fischer G."/>
            <person name="Durrens P."/>
            <person name="Casaregola S."/>
            <person name="Lafontaine I."/>
            <person name="de Montigny J."/>
            <person name="Marck C."/>
            <person name="Neuveglise C."/>
            <person name="Talla E."/>
            <person name="Goffard N."/>
            <person name="Frangeul L."/>
            <person name="Aigle M."/>
            <person name="Anthouard V."/>
            <person name="Babour A."/>
            <person name="Barbe V."/>
            <person name="Barnay S."/>
            <person name="Blanchin S."/>
            <person name="Beckerich J.-M."/>
            <person name="Beyne E."/>
            <person name="Bleykasten C."/>
            <person name="Boisrame A."/>
            <person name="Boyer J."/>
            <person name="Cattolico L."/>
            <person name="Confanioleri F."/>
            <person name="de Daruvar A."/>
            <person name="Despons L."/>
            <person name="Fabre E."/>
            <person name="Fairhead C."/>
            <person name="Ferry-Dumazet H."/>
            <person name="Groppi A."/>
            <person name="Hantraye F."/>
            <person name="Hennequin C."/>
            <person name="Jauniaux N."/>
            <person name="Joyet P."/>
            <person name="Kachouri R."/>
            <person name="Kerrest A."/>
            <person name="Koszul R."/>
            <person name="Lemaire M."/>
            <person name="Lesur I."/>
            <person name="Ma L."/>
            <person name="Muller H."/>
            <person name="Nicaud J.-M."/>
            <person name="Nikolski M."/>
            <person name="Oztas S."/>
            <person name="Ozier-Kalogeropoulos O."/>
            <person name="Pellenz S."/>
            <person name="Potier S."/>
            <person name="Richard G.-F."/>
            <person name="Straub M.-L."/>
            <person name="Suleau A."/>
            <person name="Swennen D."/>
            <person name="Tekaia F."/>
            <person name="Wesolowski-Louvel M."/>
            <person name="Westhof E."/>
            <person name="Wirth B."/>
            <person name="Zeniou-Meyer M."/>
            <person name="Zivanovic Y."/>
            <person name="Bolotin-Fukuhara M."/>
            <person name="Thierry A."/>
            <person name="Bouchier C."/>
            <person name="Caudron B."/>
            <person name="Scarpelli C."/>
            <person name="Gaillardin C."/>
            <person name="Weissenbach J."/>
            <person name="Wincker P."/>
            <person name="Souciet J.-L."/>
        </authorList>
    </citation>
    <scope>NUCLEOTIDE SEQUENCE [LARGE SCALE GENOMIC DNA]</scope>
    <source>
        <strain>CLIB 122 / E 150</strain>
    </source>
</reference>
<name>MCA1_YARLI</name>
<gene>
    <name type="primary">MCA1</name>
    <name type="ordered locus">YALI0F04059g</name>
</gene>
<sequence>MSYPGQGGNTYGGGPPGGYGGYNQQDRYGGGGGNYGPPQGPPPGQYGGGYGGPGGGYGGSGGGYGPPQGPPPGQYGGSGGPGGYGPPQGPPPGQRGNYGPPQGPPGGQGGGGGGYGHPGMGNQAPPGQYGQPGPPGPHGNHNMPPQGNQAFGGTQGYHFQYSNCSGKKKALLIGCNYIGSKNALRGCINDVHNLQRYLVQRAGYKPDDMVILTDDQRDQRSIPTKQNILQACQWLVKGAQPNDSLVFHFSGHGGQEKDVDGDEDDGYDECIYPVDFQRAGSIIDDVLHDILVKSLPPGCRLTALFDSCHSGTALDLPYVYSTKGILKEPNLAKEAGQGLLGAVSSYARGDIGGALSSIMGTVKQATTGSGANQRAKQTKTAPCDAISISGCKDSQTSADAMEGGTATGAMSFAFIEVMTRDPNQSYLSLLNNMREVLRGKYSQKPQLSASHPTDVNLKFIM</sequence>
<organism>
    <name type="scientific">Yarrowia lipolytica (strain CLIB 122 / E 150)</name>
    <name type="common">Yeast</name>
    <name type="synonym">Candida lipolytica</name>
    <dbReference type="NCBI Taxonomy" id="284591"/>
    <lineage>
        <taxon>Eukaryota</taxon>
        <taxon>Fungi</taxon>
        <taxon>Dikarya</taxon>
        <taxon>Ascomycota</taxon>
        <taxon>Saccharomycotina</taxon>
        <taxon>Dipodascomycetes</taxon>
        <taxon>Dipodascales</taxon>
        <taxon>Dipodascales incertae sedis</taxon>
        <taxon>Yarrowia</taxon>
    </lineage>
</organism>
<accession>Q6C2Y6</accession>
<comment type="function">
    <text evidence="1">Involved in cell death (apoptosis).</text>
</comment>
<comment type="similarity">
    <text evidence="4">Belongs to the peptidase C14B family.</text>
</comment>
<proteinExistence type="inferred from homology"/>
<feature type="propeptide" id="PRO_0000333673" evidence="2">
    <location>
        <begin position="1"/>
        <end status="unknown"/>
    </location>
</feature>
<feature type="chain" id="PRO_0000333674" description="Metacaspase-1">
    <location>
        <begin status="unknown"/>
        <end position="461"/>
    </location>
</feature>
<feature type="region of interest" description="Disordered" evidence="3">
    <location>
        <begin position="1"/>
        <end position="154"/>
    </location>
</feature>
<feature type="compositionally biased region" description="Gly residues" evidence="3">
    <location>
        <begin position="1"/>
        <end position="21"/>
    </location>
</feature>
<feature type="compositionally biased region" description="Gly residues" evidence="3">
    <location>
        <begin position="45"/>
        <end position="66"/>
    </location>
</feature>
<feature type="compositionally biased region" description="Gly residues" evidence="3">
    <location>
        <begin position="74"/>
        <end position="86"/>
    </location>
</feature>
<feature type="compositionally biased region" description="Gly residues" evidence="3">
    <location>
        <begin position="105"/>
        <end position="119"/>
    </location>
</feature>
<feature type="compositionally biased region" description="Low complexity" evidence="3">
    <location>
        <begin position="121"/>
        <end position="131"/>
    </location>
</feature>
<feature type="compositionally biased region" description="Low complexity" evidence="3">
    <location>
        <begin position="138"/>
        <end position="148"/>
    </location>
</feature>
<feature type="active site" evidence="1">
    <location>
        <position position="252"/>
    </location>
</feature>
<feature type="active site" evidence="1">
    <location>
        <position position="308"/>
    </location>
</feature>
<protein>
    <recommendedName>
        <fullName>Metacaspase-1</fullName>
        <ecNumber>3.4.22.-</ecNumber>
    </recommendedName>
</protein>
<dbReference type="EC" id="3.4.22.-"/>
<dbReference type="EMBL" id="CR382132">
    <property type="protein sequence ID" value="CAG77783.1"/>
    <property type="molecule type" value="Genomic_DNA"/>
</dbReference>
<dbReference type="RefSeq" id="XP_504976.1">
    <property type="nucleotide sequence ID" value="XM_504976.1"/>
</dbReference>
<dbReference type="SMR" id="Q6C2Y6"/>
<dbReference type="FunCoup" id="Q6C2Y6">
    <property type="interactions" value="365"/>
</dbReference>
<dbReference type="STRING" id="284591.Q6C2Y6"/>
<dbReference type="EnsemblFungi" id="CAG77783">
    <property type="protein sequence ID" value="CAG77783"/>
    <property type="gene ID" value="YALI0_F04059g"/>
</dbReference>
<dbReference type="KEGG" id="yli:2907712"/>
<dbReference type="VEuPathDB" id="FungiDB:YALI0_F04059g"/>
<dbReference type="HOGENOM" id="CLU_029389_0_1_1"/>
<dbReference type="InParanoid" id="Q6C2Y6"/>
<dbReference type="OMA" id="MHRIMVT"/>
<dbReference type="OrthoDB" id="9733at4891"/>
<dbReference type="Proteomes" id="UP000001300">
    <property type="component" value="Chromosome F"/>
</dbReference>
<dbReference type="GO" id="GO:0005737">
    <property type="term" value="C:cytoplasm"/>
    <property type="evidence" value="ECO:0000318"/>
    <property type="project" value="GO_Central"/>
</dbReference>
<dbReference type="GO" id="GO:0004197">
    <property type="term" value="F:cysteine-type endopeptidase activity"/>
    <property type="evidence" value="ECO:0000318"/>
    <property type="project" value="GO_Central"/>
</dbReference>
<dbReference type="GO" id="GO:0006915">
    <property type="term" value="P:apoptotic process"/>
    <property type="evidence" value="ECO:0007669"/>
    <property type="project" value="UniProtKB-KW"/>
</dbReference>
<dbReference type="GO" id="GO:0006508">
    <property type="term" value="P:proteolysis"/>
    <property type="evidence" value="ECO:0000318"/>
    <property type="project" value="GO_Central"/>
</dbReference>
<dbReference type="Gene3D" id="3.40.50.12660">
    <property type="match status" value="1"/>
</dbReference>
<dbReference type="InterPro" id="IPR029030">
    <property type="entry name" value="Caspase-like_dom_sf"/>
</dbReference>
<dbReference type="InterPro" id="IPR050452">
    <property type="entry name" value="Metacaspase"/>
</dbReference>
<dbReference type="InterPro" id="IPR011600">
    <property type="entry name" value="Pept_C14_caspase"/>
</dbReference>
<dbReference type="PANTHER" id="PTHR48104:SF30">
    <property type="entry name" value="METACASPASE-1"/>
    <property type="match status" value="1"/>
</dbReference>
<dbReference type="PANTHER" id="PTHR48104">
    <property type="entry name" value="METACASPASE-4"/>
    <property type="match status" value="1"/>
</dbReference>
<dbReference type="Pfam" id="PF00656">
    <property type="entry name" value="Peptidase_C14"/>
    <property type="match status" value="1"/>
</dbReference>
<dbReference type="SUPFAM" id="SSF52129">
    <property type="entry name" value="Caspase-like"/>
    <property type="match status" value="1"/>
</dbReference>
<keyword id="KW-0053">Apoptosis</keyword>
<keyword id="KW-0378">Hydrolase</keyword>
<keyword id="KW-0645">Protease</keyword>
<keyword id="KW-1185">Reference proteome</keyword>
<keyword id="KW-0788">Thiol protease</keyword>
<keyword id="KW-0865">Zymogen</keyword>
<evidence type="ECO:0000250" key="1"/>
<evidence type="ECO:0000255" key="2"/>
<evidence type="ECO:0000256" key="3">
    <source>
        <dbReference type="SAM" id="MobiDB-lite"/>
    </source>
</evidence>
<evidence type="ECO:0000305" key="4"/>